<reference key="1">
    <citation type="journal article" date="2009" name="PLoS Genet.">
        <title>Organised genome dynamics in the Escherichia coli species results in highly diverse adaptive paths.</title>
        <authorList>
            <person name="Touchon M."/>
            <person name="Hoede C."/>
            <person name="Tenaillon O."/>
            <person name="Barbe V."/>
            <person name="Baeriswyl S."/>
            <person name="Bidet P."/>
            <person name="Bingen E."/>
            <person name="Bonacorsi S."/>
            <person name="Bouchier C."/>
            <person name="Bouvet O."/>
            <person name="Calteau A."/>
            <person name="Chiapello H."/>
            <person name="Clermont O."/>
            <person name="Cruveiller S."/>
            <person name="Danchin A."/>
            <person name="Diard M."/>
            <person name="Dossat C."/>
            <person name="Karoui M.E."/>
            <person name="Frapy E."/>
            <person name="Garry L."/>
            <person name="Ghigo J.M."/>
            <person name="Gilles A.M."/>
            <person name="Johnson J."/>
            <person name="Le Bouguenec C."/>
            <person name="Lescat M."/>
            <person name="Mangenot S."/>
            <person name="Martinez-Jehanne V."/>
            <person name="Matic I."/>
            <person name="Nassif X."/>
            <person name="Oztas S."/>
            <person name="Petit M.A."/>
            <person name="Pichon C."/>
            <person name="Rouy Z."/>
            <person name="Ruf C.S."/>
            <person name="Schneider D."/>
            <person name="Tourret J."/>
            <person name="Vacherie B."/>
            <person name="Vallenet D."/>
            <person name="Medigue C."/>
            <person name="Rocha E.P.C."/>
            <person name="Denamur E."/>
        </authorList>
    </citation>
    <scope>NUCLEOTIDE SEQUENCE [LARGE SCALE GENOMIC DNA]</scope>
    <source>
        <strain>IAI1</strain>
    </source>
</reference>
<keyword id="KW-0067">ATP-binding</keyword>
<keyword id="KW-0963">Cytoplasm</keyword>
<keyword id="KW-0436">Ligase</keyword>
<keyword id="KW-0547">Nucleotide-binding</keyword>
<name>RTCA_ECO8A</name>
<feature type="chain" id="PRO_1000195101" description="RNA 3'-terminal phosphate cyclase">
    <location>
        <begin position="1"/>
        <end position="338"/>
    </location>
</feature>
<feature type="active site" description="Tele-AMP-histidine intermediate" evidence="1">
    <location>
        <position position="308"/>
    </location>
</feature>
<feature type="binding site" evidence="1">
    <location>
        <position position="103"/>
    </location>
    <ligand>
        <name>ATP</name>
        <dbReference type="ChEBI" id="CHEBI:30616"/>
    </ligand>
</feature>
<feature type="binding site" evidence="1">
    <location>
        <begin position="283"/>
        <end position="287"/>
    </location>
    <ligand>
        <name>ATP</name>
        <dbReference type="ChEBI" id="CHEBI:30616"/>
    </ligand>
</feature>
<evidence type="ECO:0000255" key="1">
    <source>
        <dbReference type="HAMAP-Rule" id="MF_00200"/>
    </source>
</evidence>
<protein>
    <recommendedName>
        <fullName evidence="1">RNA 3'-terminal phosphate cyclase</fullName>
        <shortName evidence="1">RNA cyclase</shortName>
        <shortName evidence="1">RNA-3'-phosphate cyclase</shortName>
        <ecNumber evidence="1">6.5.1.4</ecNumber>
    </recommendedName>
</protein>
<dbReference type="EC" id="6.5.1.4" evidence="1"/>
<dbReference type="EMBL" id="CU928160">
    <property type="protein sequence ID" value="CAR00362.1"/>
    <property type="molecule type" value="Genomic_DNA"/>
</dbReference>
<dbReference type="RefSeq" id="WP_001365783.1">
    <property type="nucleotide sequence ID" value="NC_011741.1"/>
</dbReference>
<dbReference type="SMR" id="B7M2I0"/>
<dbReference type="KEGG" id="ecr:ECIAI1_3563"/>
<dbReference type="HOGENOM" id="CLU_027882_0_0_6"/>
<dbReference type="GO" id="GO:0005737">
    <property type="term" value="C:cytoplasm"/>
    <property type="evidence" value="ECO:0007669"/>
    <property type="project" value="UniProtKB-SubCell"/>
</dbReference>
<dbReference type="GO" id="GO:0005524">
    <property type="term" value="F:ATP binding"/>
    <property type="evidence" value="ECO:0007669"/>
    <property type="project" value="UniProtKB-KW"/>
</dbReference>
<dbReference type="GO" id="GO:0003963">
    <property type="term" value="F:RNA-3'-phosphate cyclase activity"/>
    <property type="evidence" value="ECO:0007669"/>
    <property type="project" value="UniProtKB-UniRule"/>
</dbReference>
<dbReference type="GO" id="GO:0006396">
    <property type="term" value="P:RNA processing"/>
    <property type="evidence" value="ECO:0007669"/>
    <property type="project" value="InterPro"/>
</dbReference>
<dbReference type="FunFam" id="3.65.10.20:FF:000002">
    <property type="entry name" value="GM19193"/>
    <property type="match status" value="1"/>
</dbReference>
<dbReference type="FunFam" id="3.30.360.20:FF:000003">
    <property type="entry name" value="RNA 3'-terminal phosphate cyclase"/>
    <property type="match status" value="1"/>
</dbReference>
<dbReference type="Gene3D" id="3.65.10.20">
    <property type="entry name" value="RNA 3'-terminal phosphate cyclase domain"/>
    <property type="match status" value="1"/>
</dbReference>
<dbReference type="Gene3D" id="3.30.360.20">
    <property type="entry name" value="RNA 3'-terminal phosphate cyclase, insert domain"/>
    <property type="match status" value="1"/>
</dbReference>
<dbReference type="HAMAP" id="MF_00200">
    <property type="entry name" value="RTC"/>
    <property type="match status" value="1"/>
</dbReference>
<dbReference type="InterPro" id="IPR013791">
    <property type="entry name" value="RNA3'-term_phos_cycl_insert"/>
</dbReference>
<dbReference type="InterPro" id="IPR023797">
    <property type="entry name" value="RNA3'_phos_cyclase_dom"/>
</dbReference>
<dbReference type="InterPro" id="IPR037136">
    <property type="entry name" value="RNA3'_phos_cyclase_dom_sf"/>
</dbReference>
<dbReference type="InterPro" id="IPR000228">
    <property type="entry name" value="RNA3'_term_phos_cyc"/>
</dbReference>
<dbReference type="InterPro" id="IPR017770">
    <property type="entry name" value="RNA3'_term_phos_cyc_type_1"/>
</dbReference>
<dbReference type="InterPro" id="IPR020719">
    <property type="entry name" value="RNA3'_term_phos_cycl-like_CS"/>
</dbReference>
<dbReference type="InterPro" id="IPR013792">
    <property type="entry name" value="RNA3'P_cycl/enolpyr_Trfase_a/b"/>
</dbReference>
<dbReference type="InterPro" id="IPR036553">
    <property type="entry name" value="RPTC_insert"/>
</dbReference>
<dbReference type="NCBIfam" id="NF003246">
    <property type="entry name" value="PRK04204.1-2"/>
    <property type="match status" value="1"/>
</dbReference>
<dbReference type="NCBIfam" id="NF003247">
    <property type="entry name" value="PRK04204.1-3"/>
    <property type="match status" value="1"/>
</dbReference>
<dbReference type="NCBIfam" id="TIGR03399">
    <property type="entry name" value="RNA_3prim_cycl"/>
    <property type="match status" value="1"/>
</dbReference>
<dbReference type="PANTHER" id="PTHR11096">
    <property type="entry name" value="RNA 3' TERMINAL PHOSPHATE CYCLASE"/>
    <property type="match status" value="1"/>
</dbReference>
<dbReference type="PANTHER" id="PTHR11096:SF0">
    <property type="entry name" value="RNA 3'-TERMINAL PHOSPHATE CYCLASE"/>
    <property type="match status" value="1"/>
</dbReference>
<dbReference type="Pfam" id="PF01137">
    <property type="entry name" value="RTC"/>
    <property type="match status" value="1"/>
</dbReference>
<dbReference type="Pfam" id="PF05189">
    <property type="entry name" value="RTC_insert"/>
    <property type="match status" value="1"/>
</dbReference>
<dbReference type="PIRSF" id="PIRSF005378">
    <property type="entry name" value="RNA3'_term_phos_cycl_euk"/>
    <property type="match status" value="1"/>
</dbReference>
<dbReference type="SUPFAM" id="SSF55205">
    <property type="entry name" value="EPT/RTPC-like"/>
    <property type="match status" value="2"/>
</dbReference>
<dbReference type="SUPFAM" id="SSF52913">
    <property type="entry name" value="RNA 3'-terminal phosphate cyclase, RPTC, insert domain"/>
    <property type="match status" value="1"/>
</dbReference>
<dbReference type="PROSITE" id="PS01287">
    <property type="entry name" value="RTC"/>
    <property type="match status" value="1"/>
</dbReference>
<sequence length="338" mass="35955">MKRMIALDGAQGEGGGQILRSALSLSMITGQPFTITSIRAGRAKPGLLRQHLTAVKAAAEICRATVEGAELGSQRLVFRPGTVRGGEYRFAIGSAGSCTLVLQTVLPALWFADGPSRVEVSGGTDNPSAPPADFIRRVLEPLLAKIGIHQQTTLLRHGFYPAGGGVVATEVSPVASFNTLQLGERGNIVQMRGEVLLAGVSRHVAEREIATLAGSFSLHEQNIHNLPRDQGPGNTVSLEVESENITERFFVVGEKRVSAEVVAAQLVKEVKRYLASPAAVGEYLADQLVLPMALAGAGEFKVAHPSCHLLTNIAVVERFLPVRFGLIETDGVTRVSIE</sequence>
<comment type="function">
    <text evidence="1">Catalyzes the conversion of 3'-phosphate to a 2',3'-cyclic phosphodiester at the end of RNA. The mechanism of action of the enzyme occurs in 3 steps: (A) adenylation of the enzyme by ATP; (B) transfer of adenylate to an RNA-N3'P to produce RNA-N3'PP5'A; (C) and attack of the adjacent 2'-hydroxyl on the 3'-phosphorus in the diester linkage to produce the cyclic end product. The biological role of this enzyme is unknown but it is likely to function in some aspects of cellular RNA processing.</text>
</comment>
<comment type="catalytic activity">
    <reaction evidence="1">
        <text>a 3'-end 3'-phospho-ribonucleotide-RNA + ATP = a 3'-end 2',3'-cyclophospho-ribonucleotide-RNA + AMP + diphosphate</text>
        <dbReference type="Rhea" id="RHEA:23976"/>
        <dbReference type="Rhea" id="RHEA-COMP:10463"/>
        <dbReference type="Rhea" id="RHEA-COMP:10464"/>
        <dbReference type="ChEBI" id="CHEBI:30616"/>
        <dbReference type="ChEBI" id="CHEBI:33019"/>
        <dbReference type="ChEBI" id="CHEBI:83062"/>
        <dbReference type="ChEBI" id="CHEBI:83064"/>
        <dbReference type="ChEBI" id="CHEBI:456215"/>
        <dbReference type="EC" id="6.5.1.4"/>
    </reaction>
</comment>
<comment type="subcellular location">
    <subcellularLocation>
        <location evidence="1">Cytoplasm</location>
    </subcellularLocation>
</comment>
<comment type="similarity">
    <text evidence="1">Belongs to the RNA 3'-terminal cyclase family. Type 1 subfamily.</text>
</comment>
<organism>
    <name type="scientific">Escherichia coli O8 (strain IAI1)</name>
    <dbReference type="NCBI Taxonomy" id="585034"/>
    <lineage>
        <taxon>Bacteria</taxon>
        <taxon>Pseudomonadati</taxon>
        <taxon>Pseudomonadota</taxon>
        <taxon>Gammaproteobacteria</taxon>
        <taxon>Enterobacterales</taxon>
        <taxon>Enterobacteriaceae</taxon>
        <taxon>Escherichia</taxon>
    </lineage>
</organism>
<proteinExistence type="inferred from homology"/>
<accession>B7M2I0</accession>
<gene>
    <name evidence="1" type="primary">rtcA</name>
    <name type="ordered locus">ECIAI1_3563</name>
</gene>